<organism>
    <name type="scientific">Oenothera elata subsp. hookeri</name>
    <name type="common">Hooker's evening primrose</name>
    <name type="synonym">Oenothera hookeri</name>
    <dbReference type="NCBI Taxonomy" id="85636"/>
    <lineage>
        <taxon>Eukaryota</taxon>
        <taxon>Viridiplantae</taxon>
        <taxon>Streptophyta</taxon>
        <taxon>Embryophyta</taxon>
        <taxon>Tracheophyta</taxon>
        <taxon>Spermatophyta</taxon>
        <taxon>Magnoliopsida</taxon>
        <taxon>eudicotyledons</taxon>
        <taxon>Gunneridae</taxon>
        <taxon>Pentapetalae</taxon>
        <taxon>rosids</taxon>
        <taxon>malvids</taxon>
        <taxon>Myrtales</taxon>
        <taxon>Onagraceae</taxon>
        <taxon>Onagroideae</taxon>
        <taxon>Onagreae</taxon>
        <taxon>Oenothera</taxon>
    </lineage>
</organism>
<reference key="1">
    <citation type="journal article" date="2000" name="Mol. Gen. Genet.">
        <title>Complete nucleotide sequence of the Oenothera elata plastid chromosome, representing plastome I of the five distinguishable Euoenothera plastomes.</title>
        <authorList>
            <person name="Hupfer H."/>
            <person name="Swiatek M."/>
            <person name="Hornung S."/>
            <person name="Herrmann R.G."/>
            <person name="Maier R.M."/>
            <person name="Chiu W.-L."/>
            <person name="Sears B."/>
        </authorList>
    </citation>
    <scope>NUCLEOTIDE SEQUENCE [LARGE SCALE GENOMIC DNA]</scope>
    <source>
        <strain>cv. Johansen</strain>
    </source>
</reference>
<reference key="2">
    <citation type="journal article" date="2008" name="Nucleic Acids Res.">
        <title>The complete nucleotide sequences of the five genetically distinct plastid genomes of Oenothera, subsection Oenothera: I. Sequence evaluation and plastome evolution.</title>
        <authorList>
            <person name="Greiner S."/>
            <person name="Wang X."/>
            <person name="Rauwolf U."/>
            <person name="Silber M.V."/>
            <person name="Mayer K."/>
            <person name="Meurer J."/>
            <person name="Haberer G."/>
            <person name="Herrmann R.G."/>
        </authorList>
    </citation>
    <scope>SEQUENCE REVISION TO 32-34 AND 78</scope>
</reference>
<evidence type="ECO:0000250" key="1"/>
<evidence type="ECO:0000305" key="2"/>
<proteinExistence type="inferred from homology"/>
<feature type="chain" id="PRO_0000126583" description="Small ribosomal subunit protein uS8c">
    <location>
        <begin position="1"/>
        <end position="138"/>
    </location>
</feature>
<geneLocation type="chloroplast"/>
<keyword id="KW-0150">Chloroplast</keyword>
<keyword id="KW-0934">Plastid</keyword>
<keyword id="KW-0687">Ribonucleoprotein</keyword>
<keyword id="KW-0689">Ribosomal protein</keyword>
<keyword id="KW-0694">RNA-binding</keyword>
<keyword id="KW-0699">rRNA-binding</keyword>
<comment type="function">
    <text evidence="1">One of the primary rRNA binding proteins, it binds directly to 16S rRNA central domain where it helps coordinate assembly of the platform of the 30S subunit.</text>
</comment>
<comment type="subunit">
    <text evidence="1">Part of the 30S ribosomal subunit.</text>
</comment>
<comment type="subcellular location">
    <subcellularLocation>
        <location>Plastid</location>
        <location>Chloroplast</location>
    </subcellularLocation>
</comment>
<comment type="similarity">
    <text evidence="2">Belongs to the universal ribosomal protein uS8 family.</text>
</comment>
<dbReference type="EMBL" id="AJ271079">
    <property type="protein sequence ID" value="CAB67195.2"/>
    <property type="molecule type" value="Genomic_DNA"/>
</dbReference>
<dbReference type="RefSeq" id="NP_084728.2">
    <property type="nucleotide sequence ID" value="NC_002693.2"/>
</dbReference>
<dbReference type="SMR" id="Q9MTJ0"/>
<dbReference type="GeneID" id="802698"/>
<dbReference type="GO" id="GO:0009507">
    <property type="term" value="C:chloroplast"/>
    <property type="evidence" value="ECO:0007669"/>
    <property type="project" value="UniProtKB-SubCell"/>
</dbReference>
<dbReference type="GO" id="GO:1990904">
    <property type="term" value="C:ribonucleoprotein complex"/>
    <property type="evidence" value="ECO:0007669"/>
    <property type="project" value="UniProtKB-KW"/>
</dbReference>
<dbReference type="GO" id="GO:0005840">
    <property type="term" value="C:ribosome"/>
    <property type="evidence" value="ECO:0007669"/>
    <property type="project" value="UniProtKB-KW"/>
</dbReference>
<dbReference type="GO" id="GO:0019843">
    <property type="term" value="F:rRNA binding"/>
    <property type="evidence" value="ECO:0007669"/>
    <property type="project" value="UniProtKB-UniRule"/>
</dbReference>
<dbReference type="GO" id="GO:0003735">
    <property type="term" value="F:structural constituent of ribosome"/>
    <property type="evidence" value="ECO:0007669"/>
    <property type="project" value="InterPro"/>
</dbReference>
<dbReference type="GO" id="GO:0006412">
    <property type="term" value="P:translation"/>
    <property type="evidence" value="ECO:0007669"/>
    <property type="project" value="UniProtKB-UniRule"/>
</dbReference>
<dbReference type="FunFam" id="3.30.1490.10:FF:000001">
    <property type="entry name" value="30S ribosomal protein S8"/>
    <property type="match status" value="1"/>
</dbReference>
<dbReference type="FunFam" id="3.30.1370.30:FF:000004">
    <property type="entry name" value="30S ribosomal protein S8, chloroplastic"/>
    <property type="match status" value="1"/>
</dbReference>
<dbReference type="Gene3D" id="3.30.1370.30">
    <property type="match status" value="1"/>
</dbReference>
<dbReference type="Gene3D" id="3.30.1490.10">
    <property type="match status" value="1"/>
</dbReference>
<dbReference type="HAMAP" id="MF_01302_B">
    <property type="entry name" value="Ribosomal_uS8_B"/>
    <property type="match status" value="1"/>
</dbReference>
<dbReference type="InterPro" id="IPR000630">
    <property type="entry name" value="Ribosomal_uS8"/>
</dbReference>
<dbReference type="InterPro" id="IPR047863">
    <property type="entry name" value="Ribosomal_uS8_CS"/>
</dbReference>
<dbReference type="InterPro" id="IPR035987">
    <property type="entry name" value="Ribosomal_uS8_sf"/>
</dbReference>
<dbReference type="NCBIfam" id="NF001109">
    <property type="entry name" value="PRK00136.1"/>
    <property type="match status" value="1"/>
</dbReference>
<dbReference type="PANTHER" id="PTHR11758">
    <property type="entry name" value="40S RIBOSOMAL PROTEIN S15A"/>
    <property type="match status" value="1"/>
</dbReference>
<dbReference type="Pfam" id="PF00410">
    <property type="entry name" value="Ribosomal_S8"/>
    <property type="match status" value="1"/>
</dbReference>
<dbReference type="SUPFAM" id="SSF56047">
    <property type="entry name" value="Ribosomal protein S8"/>
    <property type="match status" value="1"/>
</dbReference>
<dbReference type="PROSITE" id="PS00053">
    <property type="entry name" value="RIBOSOMAL_S8"/>
    <property type="match status" value="1"/>
</dbReference>
<protein>
    <recommendedName>
        <fullName evidence="2">Small ribosomal subunit protein uS8c</fullName>
    </recommendedName>
    <alternativeName>
        <fullName>30S ribosomal protein S8, chloroplastic</fullName>
    </alternativeName>
</protein>
<sequence length="138" mass="15878">MGRDTIADIITSIRNVDMNRKGTVRIESTNMAEKIVKILLREGFIENVRKHQENKKSFLVLTLRHRRNRKGPSPSRTFLNLNLKRISRPGLRVYSNYQKIPRILGGMGIVILSTSRGIMTDREARLEGIGGEILCYIW</sequence>
<name>RR8_OENEH</name>
<gene>
    <name type="primary">rps8</name>
</gene>
<accession>Q9MTJ0</accession>